<reference key="1">
    <citation type="journal article" date="2001" name="Nature">
        <title>Genome sequence of Yersinia pestis, the causative agent of plague.</title>
        <authorList>
            <person name="Parkhill J."/>
            <person name="Wren B.W."/>
            <person name="Thomson N.R."/>
            <person name="Titball R.W."/>
            <person name="Holden M.T.G."/>
            <person name="Prentice M.B."/>
            <person name="Sebaihia M."/>
            <person name="James K.D."/>
            <person name="Churcher C.M."/>
            <person name="Mungall K.L."/>
            <person name="Baker S."/>
            <person name="Basham D."/>
            <person name="Bentley S.D."/>
            <person name="Brooks K."/>
            <person name="Cerdeno-Tarraga A.-M."/>
            <person name="Chillingworth T."/>
            <person name="Cronin A."/>
            <person name="Davies R.M."/>
            <person name="Davis P."/>
            <person name="Dougan G."/>
            <person name="Feltwell T."/>
            <person name="Hamlin N."/>
            <person name="Holroyd S."/>
            <person name="Jagels K."/>
            <person name="Karlyshev A.V."/>
            <person name="Leather S."/>
            <person name="Moule S."/>
            <person name="Oyston P.C.F."/>
            <person name="Quail M.A."/>
            <person name="Rutherford K.M."/>
            <person name="Simmonds M."/>
            <person name="Skelton J."/>
            <person name="Stevens K."/>
            <person name="Whitehead S."/>
            <person name="Barrell B.G."/>
        </authorList>
    </citation>
    <scope>NUCLEOTIDE SEQUENCE [LARGE SCALE GENOMIC DNA]</scope>
    <source>
        <strain>CO-92 / Biovar Orientalis</strain>
    </source>
</reference>
<reference key="2">
    <citation type="journal article" date="2002" name="J. Bacteriol.">
        <title>Genome sequence of Yersinia pestis KIM.</title>
        <authorList>
            <person name="Deng W."/>
            <person name="Burland V."/>
            <person name="Plunkett G. III"/>
            <person name="Boutin A."/>
            <person name="Mayhew G.F."/>
            <person name="Liss P."/>
            <person name="Perna N.T."/>
            <person name="Rose D.J."/>
            <person name="Mau B."/>
            <person name="Zhou S."/>
            <person name="Schwartz D.C."/>
            <person name="Fetherston J.D."/>
            <person name="Lindler L.E."/>
            <person name="Brubaker R.R."/>
            <person name="Plano G.V."/>
            <person name="Straley S.C."/>
            <person name="McDonough K.A."/>
            <person name="Nilles M.L."/>
            <person name="Matson J.S."/>
            <person name="Blattner F.R."/>
            <person name="Perry R.D."/>
        </authorList>
    </citation>
    <scope>NUCLEOTIDE SEQUENCE [LARGE SCALE GENOMIC DNA]</scope>
    <source>
        <strain>KIM10+ / Biovar Mediaevalis</strain>
    </source>
</reference>
<reference key="3">
    <citation type="journal article" date="2004" name="DNA Res.">
        <title>Complete genome sequence of Yersinia pestis strain 91001, an isolate avirulent to humans.</title>
        <authorList>
            <person name="Song Y."/>
            <person name="Tong Z."/>
            <person name="Wang J."/>
            <person name="Wang L."/>
            <person name="Guo Z."/>
            <person name="Han Y."/>
            <person name="Zhang J."/>
            <person name="Pei D."/>
            <person name="Zhou D."/>
            <person name="Qin H."/>
            <person name="Pang X."/>
            <person name="Han Y."/>
            <person name="Zhai J."/>
            <person name="Li M."/>
            <person name="Cui B."/>
            <person name="Qi Z."/>
            <person name="Jin L."/>
            <person name="Dai R."/>
            <person name="Chen F."/>
            <person name="Li S."/>
            <person name="Ye C."/>
            <person name="Du Z."/>
            <person name="Lin W."/>
            <person name="Wang J."/>
            <person name="Yu J."/>
            <person name="Yang H."/>
            <person name="Wang J."/>
            <person name="Huang P."/>
            <person name="Yang R."/>
        </authorList>
    </citation>
    <scope>NUCLEOTIDE SEQUENCE [LARGE SCALE GENOMIC DNA]</scope>
    <source>
        <strain>91001 / Biovar Mediaevalis</strain>
    </source>
</reference>
<feature type="chain" id="PRO_0000136581" description="Arabinose 5-phosphate isomerase KdsD">
    <location>
        <begin position="1"/>
        <end position="328"/>
    </location>
</feature>
<feature type="domain" description="SIS" evidence="3">
    <location>
        <begin position="41"/>
        <end position="184"/>
    </location>
</feature>
<feature type="domain" description="CBS 1" evidence="2">
    <location>
        <begin position="210"/>
        <end position="268"/>
    </location>
</feature>
<feature type="domain" description="CBS 2" evidence="2">
    <location>
        <begin position="277"/>
        <end position="328"/>
    </location>
</feature>
<feature type="binding site" evidence="1">
    <location>
        <begin position="75"/>
        <end position="76"/>
    </location>
    <ligand>
        <name>substrate</name>
    </ligand>
</feature>
<feature type="binding site" evidence="1">
    <location>
        <position position="82"/>
    </location>
    <ligand>
        <name>substrate</name>
    </ligand>
</feature>
<feature type="binding site" evidence="1">
    <location>
        <position position="82"/>
    </location>
    <ligand>
        <name>Zn(2+)</name>
        <dbReference type="ChEBI" id="CHEBI:29105"/>
    </ligand>
</feature>
<feature type="binding site" evidence="1">
    <location>
        <position position="88"/>
    </location>
    <ligand>
        <name>substrate</name>
    </ligand>
</feature>
<feature type="binding site" evidence="1">
    <location>
        <begin position="114"/>
        <end position="123"/>
    </location>
    <ligand>
        <name>substrate</name>
    </ligand>
</feature>
<feature type="binding site" evidence="1">
    <location>
        <begin position="148"/>
        <end position="150"/>
    </location>
    <ligand>
        <name>substrate</name>
    </ligand>
</feature>
<feature type="binding site" evidence="1">
    <location>
        <position position="275"/>
    </location>
    <ligand>
        <name>substrate</name>
    </ligand>
</feature>
<feature type="site" description="Catalytically relevant" evidence="1">
    <location>
        <position position="59"/>
    </location>
</feature>
<feature type="site" description="Catalytically relevant" evidence="1">
    <location>
        <position position="111"/>
    </location>
</feature>
<feature type="site" description="Catalytically relevant" evidence="1">
    <location>
        <position position="152"/>
    </location>
</feature>
<feature type="site" description="Catalytically relevant" evidence="1">
    <location>
        <position position="193"/>
    </location>
</feature>
<evidence type="ECO:0000250" key="1"/>
<evidence type="ECO:0000255" key="2">
    <source>
        <dbReference type="PROSITE-ProRule" id="PRU00703"/>
    </source>
</evidence>
<evidence type="ECO:0000255" key="3">
    <source>
        <dbReference type="PROSITE-ProRule" id="PRU00797"/>
    </source>
</evidence>
<evidence type="ECO:0000305" key="4"/>
<proteinExistence type="inferred from homology"/>
<gene>
    <name type="primary">kdsD</name>
    <name type="ordered locus">YPO3577</name>
    <name type="ordered locus">y0149</name>
    <name type="ordered locus">YP_3832</name>
</gene>
<accession>Q8D1Q8</accession>
<accession>Q0WB74</accession>
<accession>Q8ZB48</accession>
<organism>
    <name type="scientific">Yersinia pestis</name>
    <dbReference type="NCBI Taxonomy" id="632"/>
    <lineage>
        <taxon>Bacteria</taxon>
        <taxon>Pseudomonadati</taxon>
        <taxon>Pseudomonadota</taxon>
        <taxon>Gammaproteobacteria</taxon>
        <taxon>Enterobacterales</taxon>
        <taxon>Yersiniaceae</taxon>
        <taxon>Yersinia</taxon>
    </lineage>
</organism>
<comment type="function">
    <text evidence="1">Involved in the biosynthesis of 3-deoxy-D-manno-octulosonate (KDO), a unique 8-carbon sugar component of lipopolysaccharides (LPSs). Catalyzes the reversible aldol-ketol isomerization between D-ribulose 5-phosphate (Ru5P) and D-arabinose 5-phosphate (A5P) (By similarity).</text>
</comment>
<comment type="catalytic activity">
    <reaction>
        <text>D-arabinose 5-phosphate = D-ribulose 5-phosphate</text>
        <dbReference type="Rhea" id="RHEA:23104"/>
        <dbReference type="ChEBI" id="CHEBI:57693"/>
        <dbReference type="ChEBI" id="CHEBI:58121"/>
        <dbReference type="EC" id="5.3.1.13"/>
    </reaction>
</comment>
<comment type="pathway">
    <text>Carbohydrate biosynthesis; 3-deoxy-D-manno-octulosonate biosynthesis; 3-deoxy-D-manno-octulosonate from D-ribulose 5-phosphate: step 1/3.</text>
</comment>
<comment type="pathway">
    <text>Bacterial outer membrane biogenesis; lipopolysaccharide biosynthesis.</text>
</comment>
<comment type="subunit">
    <text evidence="1">Homotetramer.</text>
</comment>
<comment type="similarity">
    <text evidence="4">Belongs to the SIS family. GutQ/KpsF subfamily.</text>
</comment>
<comment type="sequence caution" evidence="4">
    <conflict type="erroneous initiation">
        <sequence resource="EMBL-CDS" id="AAM83742"/>
    </conflict>
    <text>Extended N-terminus.</text>
</comment>
<comment type="sequence caution" evidence="4">
    <conflict type="erroneous initiation">
        <sequence resource="EMBL-CDS" id="AAS63979"/>
    </conflict>
    <text>Extended N-terminus.</text>
</comment>
<sequence>MSTFDLQPGVDFQQAGKQVLQIEREGLAQLDQYINEDFSRACEAIFRCHGKVVVMGMGKSGHIGCKIAATFASTGTPAFFVHPGEASHGDLGMITPQDIVLAISNSGESNEILTLIPVLKRQKILLICMSSNPESTMGKAADIHLCINVPQEACPLGLAPTTSTTATLVMGDALAVALLKARGFTQEDFALSHPGGALGRKLLLRISDIMHTGTEIPTVSPDASLRDALLEITRKSLGLTVICDDSMRIKGIFTDGDLRRVFDMGIDLNNAKIADVMTRGGIRVPPNILAVDALNLMESRHITALLVADGDQLLGVVHMHDMLRAGVV</sequence>
<dbReference type="EC" id="5.3.1.13"/>
<dbReference type="EMBL" id="AL590842">
    <property type="protein sequence ID" value="CAL22165.1"/>
    <property type="molecule type" value="Genomic_DNA"/>
</dbReference>
<dbReference type="EMBL" id="AE009952">
    <property type="protein sequence ID" value="AAM83742.1"/>
    <property type="status" value="ALT_INIT"/>
    <property type="molecule type" value="Genomic_DNA"/>
</dbReference>
<dbReference type="EMBL" id="AE017042">
    <property type="protein sequence ID" value="AAS63979.1"/>
    <property type="status" value="ALT_INIT"/>
    <property type="molecule type" value="Genomic_DNA"/>
</dbReference>
<dbReference type="PIR" id="AB0435">
    <property type="entry name" value="AB0435"/>
</dbReference>
<dbReference type="RefSeq" id="WP_002210119.1">
    <property type="nucleotide sequence ID" value="NZ_WUCM01000032.1"/>
</dbReference>
<dbReference type="RefSeq" id="YP_002348464.1">
    <property type="nucleotide sequence ID" value="NC_003143.1"/>
</dbReference>
<dbReference type="SMR" id="Q8D1Q8"/>
<dbReference type="STRING" id="214092.YPO3577"/>
<dbReference type="PaxDb" id="214092-YPO3577"/>
<dbReference type="DNASU" id="1145095"/>
<dbReference type="EnsemblBacteria" id="AAS63979">
    <property type="protein sequence ID" value="AAS63979"/>
    <property type="gene ID" value="YP_3832"/>
</dbReference>
<dbReference type="GeneID" id="57975138"/>
<dbReference type="KEGG" id="ype:YPO3577"/>
<dbReference type="KEGG" id="ypk:y0149"/>
<dbReference type="KEGG" id="ypm:YP_3832"/>
<dbReference type="PATRIC" id="fig|214092.21.peg.4071"/>
<dbReference type="eggNOG" id="COG0517">
    <property type="taxonomic scope" value="Bacteria"/>
</dbReference>
<dbReference type="eggNOG" id="COG0794">
    <property type="taxonomic scope" value="Bacteria"/>
</dbReference>
<dbReference type="HOGENOM" id="CLU_040681_13_1_6"/>
<dbReference type="OrthoDB" id="9762536at2"/>
<dbReference type="UniPathway" id="UPA00030"/>
<dbReference type="UniPathway" id="UPA00357">
    <property type="reaction ID" value="UER00473"/>
</dbReference>
<dbReference type="Proteomes" id="UP000000815">
    <property type="component" value="Chromosome"/>
</dbReference>
<dbReference type="Proteomes" id="UP000001019">
    <property type="component" value="Chromosome"/>
</dbReference>
<dbReference type="Proteomes" id="UP000002490">
    <property type="component" value="Chromosome"/>
</dbReference>
<dbReference type="GO" id="GO:0019146">
    <property type="term" value="F:arabinose-5-phosphate isomerase activity"/>
    <property type="evidence" value="ECO:0007669"/>
    <property type="project" value="UniProtKB-EC"/>
</dbReference>
<dbReference type="GO" id="GO:0097367">
    <property type="term" value="F:carbohydrate derivative binding"/>
    <property type="evidence" value="ECO:0007669"/>
    <property type="project" value="InterPro"/>
</dbReference>
<dbReference type="GO" id="GO:0046872">
    <property type="term" value="F:metal ion binding"/>
    <property type="evidence" value="ECO:0007669"/>
    <property type="project" value="UniProtKB-KW"/>
</dbReference>
<dbReference type="GO" id="GO:0009103">
    <property type="term" value="P:lipopolysaccharide biosynthetic process"/>
    <property type="evidence" value="ECO:0007669"/>
    <property type="project" value="UniProtKB-UniPathway"/>
</dbReference>
<dbReference type="CDD" id="cd04604">
    <property type="entry name" value="CBS_pair_SIS_assoc"/>
    <property type="match status" value="1"/>
</dbReference>
<dbReference type="CDD" id="cd05014">
    <property type="entry name" value="SIS_Kpsf"/>
    <property type="match status" value="1"/>
</dbReference>
<dbReference type="FunFam" id="3.10.580.10:FF:000007">
    <property type="entry name" value="Arabinose 5-phosphate isomerase"/>
    <property type="match status" value="1"/>
</dbReference>
<dbReference type="FunFam" id="3.40.50.10490:FF:000011">
    <property type="entry name" value="Arabinose 5-phosphate isomerase"/>
    <property type="match status" value="1"/>
</dbReference>
<dbReference type="Gene3D" id="3.10.580.10">
    <property type="entry name" value="CBS-domain"/>
    <property type="match status" value="1"/>
</dbReference>
<dbReference type="Gene3D" id="3.40.50.10490">
    <property type="entry name" value="Glucose-6-phosphate isomerase like protein, domain 1"/>
    <property type="match status" value="1"/>
</dbReference>
<dbReference type="InterPro" id="IPR000644">
    <property type="entry name" value="CBS_dom"/>
</dbReference>
<dbReference type="InterPro" id="IPR046342">
    <property type="entry name" value="CBS_dom_sf"/>
</dbReference>
<dbReference type="InterPro" id="IPR050986">
    <property type="entry name" value="GutQ/KpsF_isomerases"/>
</dbReference>
<dbReference type="InterPro" id="IPR004800">
    <property type="entry name" value="KdsD/KpsF-type"/>
</dbReference>
<dbReference type="InterPro" id="IPR001347">
    <property type="entry name" value="SIS_dom"/>
</dbReference>
<dbReference type="InterPro" id="IPR046348">
    <property type="entry name" value="SIS_dom_sf"/>
</dbReference>
<dbReference type="InterPro" id="IPR035474">
    <property type="entry name" value="SIS_Kpsf"/>
</dbReference>
<dbReference type="NCBIfam" id="TIGR00393">
    <property type="entry name" value="kpsF"/>
    <property type="match status" value="1"/>
</dbReference>
<dbReference type="NCBIfam" id="NF008141">
    <property type="entry name" value="PRK10892.1"/>
    <property type="match status" value="1"/>
</dbReference>
<dbReference type="PANTHER" id="PTHR42745">
    <property type="match status" value="1"/>
</dbReference>
<dbReference type="PANTHER" id="PTHR42745:SF1">
    <property type="entry name" value="ARABINOSE 5-PHOSPHATE ISOMERASE KDSD"/>
    <property type="match status" value="1"/>
</dbReference>
<dbReference type="Pfam" id="PF00571">
    <property type="entry name" value="CBS"/>
    <property type="match status" value="2"/>
</dbReference>
<dbReference type="Pfam" id="PF01380">
    <property type="entry name" value="SIS"/>
    <property type="match status" value="1"/>
</dbReference>
<dbReference type="PIRSF" id="PIRSF004692">
    <property type="entry name" value="KdsD_KpsF"/>
    <property type="match status" value="1"/>
</dbReference>
<dbReference type="SMART" id="SM00116">
    <property type="entry name" value="CBS"/>
    <property type="match status" value="2"/>
</dbReference>
<dbReference type="SUPFAM" id="SSF53697">
    <property type="entry name" value="SIS domain"/>
    <property type="match status" value="1"/>
</dbReference>
<dbReference type="PROSITE" id="PS51371">
    <property type="entry name" value="CBS"/>
    <property type="match status" value="2"/>
</dbReference>
<dbReference type="PROSITE" id="PS51464">
    <property type="entry name" value="SIS"/>
    <property type="match status" value="1"/>
</dbReference>
<keyword id="KW-0119">Carbohydrate metabolism</keyword>
<keyword id="KW-0129">CBS domain</keyword>
<keyword id="KW-0413">Isomerase</keyword>
<keyword id="KW-0448">Lipopolysaccharide biosynthesis</keyword>
<keyword id="KW-0479">Metal-binding</keyword>
<keyword id="KW-1185">Reference proteome</keyword>
<keyword id="KW-0677">Repeat</keyword>
<keyword id="KW-0862">Zinc</keyword>
<name>KDSD_YERPE</name>
<protein>
    <recommendedName>
        <fullName>Arabinose 5-phosphate isomerase KdsD</fullName>
        <shortName>API</shortName>
        <shortName>L-API</shortName>
        <ecNumber>5.3.1.13</ecNumber>
    </recommendedName>
</protein>